<accession>P83253</accession>
<accession>Q2PZH2</accession>
<accession>Q3BK12</accession>
<sequence length="111" mass="12099">MIQVLLVTICLAVFPYQGSSIILESGNVNDYEIVYPKKVTVLPTGAMNSGNPCCDPVTCKPRRGEHCVSGPCCRNCKFLNAGTICNRARGDDMNDYCTGISSDCPRNPYKD</sequence>
<feature type="signal peptide" evidence="1">
    <location>
        <begin position="1"/>
        <end position="20"/>
    </location>
</feature>
<feature type="propeptide" id="PRO_0000318090" evidence="3 4 5">
    <location>
        <begin position="21"/>
        <end position="47"/>
    </location>
</feature>
<feature type="chain" id="PRO_5000076857" description="Disintegrin lebein-1-alpha">
    <location>
        <begin position="48"/>
        <end position="111"/>
    </location>
</feature>
<feature type="domain" description="Disintegrin" evidence="2">
    <location>
        <begin position="47"/>
        <end position="111"/>
    </location>
</feature>
<feature type="short sequence motif" description="Cell attachment site">
    <location>
        <begin position="89"/>
        <end position="91"/>
    </location>
</feature>
<feature type="disulfide bond" evidence="2">
    <location>
        <begin position="53"/>
        <end position="76"/>
    </location>
</feature>
<feature type="disulfide bond" description="Interchain (with C-7 in subunit beta)" evidence="2">
    <location>
        <position position="54"/>
    </location>
</feature>
<feature type="disulfide bond" description="Interchain (with C-12 in subunit beta)" evidence="2">
    <location>
        <position position="59"/>
    </location>
</feature>
<feature type="disulfide bond" evidence="2">
    <location>
        <begin position="67"/>
        <end position="73"/>
    </location>
</feature>
<feature type="disulfide bond" evidence="2">
    <location>
        <begin position="72"/>
        <end position="97"/>
    </location>
</feature>
<feature type="disulfide bond" evidence="2">
    <location>
        <begin position="85"/>
        <end position="104"/>
    </location>
</feature>
<feature type="sequence conflict" description="In Ref. 2; ABC00778." evidence="6" ref="2">
    <original>E</original>
    <variation>D</variation>
    <location>
        <position position="32"/>
    </location>
</feature>
<feature type="sequence conflict" description="In Ref. 2; ABC00778." evidence="6" ref="2">
    <original>P</original>
    <variation>L</variation>
    <location>
        <position position="36"/>
    </location>
</feature>
<protein>
    <recommendedName>
        <fullName>Disintegrin lebein-1-alpha</fullName>
    </recommendedName>
    <alternativeName>
        <fullName>ML-3</fullName>
    </alternativeName>
    <alternativeName>
        <fullName>MS-II</fullName>
    </alternativeName>
    <alternativeName>
        <fullName>Platelet aggregation activation inhibitor</fullName>
    </alternativeName>
</protein>
<comment type="function">
    <text evidence="3 4">Strongly inhibits ADP-induced platelet aggregation on human platelet-rich plasma. Also avidly binds to the laminin-binding beta-1 integrins (alpha-3/beta-1, alpha-6/beta-1, and alpha-7/beta-1) in an RGD-independent manner.</text>
</comment>
<comment type="subunit">
    <text evidence="3 4">Heterodimer with subunit beta; disulfide-linked.</text>
</comment>
<comment type="subcellular location">
    <subcellularLocation>
        <location evidence="3">Secreted</location>
    </subcellularLocation>
</comment>
<comment type="tissue specificity">
    <text evidence="7">Expressed by the venom gland.</text>
</comment>
<comment type="mass spectrometry" mass="6992.05" method="MALDI" evidence="3"/>
<comment type="miscellaneous">
    <text evidence="8">Negative results: does not interact with the collagen-binding alpha-1/beta-1 (ITGA1/ITGB1) and alpha-2/beta-1 (ITGA2/ITGB1) integrins.</text>
</comment>
<comment type="similarity">
    <text evidence="6">Belongs to the disintegrin family. Dimeric disintegrin subfamily.</text>
</comment>
<name>DID1A_MACLB</name>
<dbReference type="EMBL" id="AM114017">
    <property type="protein sequence ID" value="CAJ34941.1"/>
    <property type="molecule type" value="mRNA"/>
</dbReference>
<dbReference type="EMBL" id="DQ288157">
    <property type="protein sequence ID" value="ABC00778.1"/>
    <property type="molecule type" value="mRNA"/>
</dbReference>
<dbReference type="SMR" id="P83253"/>
<dbReference type="GO" id="GO:0005576">
    <property type="term" value="C:extracellular region"/>
    <property type="evidence" value="ECO:0007669"/>
    <property type="project" value="UniProtKB-SubCell"/>
</dbReference>
<dbReference type="GO" id="GO:0090729">
    <property type="term" value="F:toxin activity"/>
    <property type="evidence" value="ECO:0007669"/>
    <property type="project" value="UniProtKB-KW"/>
</dbReference>
<dbReference type="GO" id="GO:0007155">
    <property type="term" value="P:cell adhesion"/>
    <property type="evidence" value="ECO:0000304"/>
    <property type="project" value="UniProtKB"/>
</dbReference>
<dbReference type="GO" id="GO:0030195">
    <property type="term" value="P:negative regulation of blood coagulation"/>
    <property type="evidence" value="ECO:0000304"/>
    <property type="project" value="UniProtKB"/>
</dbReference>
<dbReference type="Gene3D" id="4.10.70.10">
    <property type="entry name" value="Disintegrin domain"/>
    <property type="match status" value="1"/>
</dbReference>
<dbReference type="InterPro" id="IPR018358">
    <property type="entry name" value="Disintegrin_CS"/>
</dbReference>
<dbReference type="InterPro" id="IPR001762">
    <property type="entry name" value="Disintegrin_dom"/>
</dbReference>
<dbReference type="InterPro" id="IPR036436">
    <property type="entry name" value="Disintegrin_dom_sf"/>
</dbReference>
<dbReference type="PANTHER" id="PTHR11905">
    <property type="entry name" value="ADAM A DISINTEGRIN AND METALLOPROTEASE DOMAIN"/>
    <property type="match status" value="1"/>
</dbReference>
<dbReference type="PANTHER" id="PTHR11905:SF159">
    <property type="entry name" value="ADAM METALLOPROTEASE"/>
    <property type="match status" value="1"/>
</dbReference>
<dbReference type="Pfam" id="PF00200">
    <property type="entry name" value="Disintegrin"/>
    <property type="match status" value="1"/>
</dbReference>
<dbReference type="PRINTS" id="PR00289">
    <property type="entry name" value="DISINTEGRIN"/>
</dbReference>
<dbReference type="SMART" id="SM00050">
    <property type="entry name" value="DISIN"/>
    <property type="match status" value="1"/>
</dbReference>
<dbReference type="SUPFAM" id="SSF57552">
    <property type="entry name" value="Blood coagulation inhibitor (disintegrin)"/>
    <property type="match status" value="1"/>
</dbReference>
<dbReference type="PROSITE" id="PS00427">
    <property type="entry name" value="DISINTEGRIN_1"/>
    <property type="match status" value="1"/>
</dbReference>
<dbReference type="PROSITE" id="PS50214">
    <property type="entry name" value="DISINTEGRIN_2"/>
    <property type="match status" value="1"/>
</dbReference>
<proteinExistence type="evidence at protein level"/>
<keyword id="KW-1217">Cell adhesion impairing toxin</keyword>
<keyword id="KW-0903">Direct protein sequencing</keyword>
<keyword id="KW-1015">Disulfide bond</keyword>
<keyword id="KW-1199">Hemostasis impairing toxin</keyword>
<keyword id="KW-1201">Platelet aggregation inhibiting toxin</keyword>
<keyword id="KW-0964">Secreted</keyword>
<keyword id="KW-0732">Signal</keyword>
<keyword id="KW-0800">Toxin</keyword>
<organism>
    <name type="scientific">Macrovipera lebetinus</name>
    <name type="common">Levantine viper</name>
    <name type="synonym">Vipera lebetina</name>
    <dbReference type="NCBI Taxonomy" id="3148341"/>
    <lineage>
        <taxon>Eukaryota</taxon>
        <taxon>Metazoa</taxon>
        <taxon>Chordata</taxon>
        <taxon>Craniata</taxon>
        <taxon>Vertebrata</taxon>
        <taxon>Euteleostomi</taxon>
        <taxon>Lepidosauria</taxon>
        <taxon>Squamata</taxon>
        <taxon>Bifurcata</taxon>
        <taxon>Unidentata</taxon>
        <taxon>Episquamata</taxon>
        <taxon>Toxicofera</taxon>
        <taxon>Serpentes</taxon>
        <taxon>Colubroidea</taxon>
        <taxon>Viperidae</taxon>
        <taxon>Viperinae</taxon>
        <taxon>Macrovipera</taxon>
    </lineage>
</organism>
<evidence type="ECO:0000255" key="1"/>
<evidence type="ECO:0000255" key="2">
    <source>
        <dbReference type="PROSITE-ProRule" id="PRU00068"/>
    </source>
</evidence>
<evidence type="ECO:0000269" key="3">
    <source>
    </source>
</evidence>
<evidence type="ECO:0000269" key="4">
    <source>
    </source>
</evidence>
<evidence type="ECO:0000269" key="5">
    <source>
    </source>
</evidence>
<evidence type="ECO:0000305" key="6"/>
<evidence type="ECO:0000305" key="7">
    <source>
    </source>
</evidence>
<evidence type="ECO:0000305" key="8">
    <source>
    </source>
</evidence>
<reference key="1">
    <citation type="journal article" date="2006" name="Biochem. J.">
        <title>Molecular cloning of disintegrins from Cerastes vipera and Macrovipera lebetina transmediterranea venom gland cDNA libraries: insight into the evolution of the snake venom integrin-inhibition system.</title>
        <authorList>
            <person name="Sanz L."/>
            <person name="Bazaa A."/>
            <person name="Marrakchi N."/>
            <person name="Perez A."/>
            <person name="Chenik M."/>
            <person name="Bel Lasfer Z."/>
            <person name="El Ayeb M."/>
            <person name="Calvete J.J."/>
        </authorList>
    </citation>
    <scope>NUCLEOTIDE SEQUENCE [MRNA]</scope>
    <scope>PROTEIN SEQUENCE OF 48-62; 64-74; 78-87 AND 90-106</scope>
    <scope>IDENTIFICATION BY MASS SPECTROMETRY</scope>
    <source>
        <tissue>Venom</tissue>
        <tissue>Venom gland</tissue>
    </source>
</reference>
<reference key="2">
    <citation type="submission" date="2005-11" db="EMBL/GenBank/DDBJ databases">
        <title>Lebein alpha, a subunit of dimeric disintegrin with a short coding region.</title>
        <authorList>
            <person name="Siigur E."/>
            <person name="Aaspollu A."/>
            <person name="Siigur J."/>
        </authorList>
    </citation>
    <scope>NUCLEOTIDE SEQUENCE [MRNA]</scope>
    <source>
        <tissue>Venom gland</tissue>
    </source>
</reference>
<reference key="3">
    <citation type="journal article" date="2001" name="Biochim. Biophys. Acta">
        <title>Amino acid structure and characterization of a heterodimeric disintegrin from Vipera lebetina venom.</title>
        <authorList>
            <person name="Gasmi A."/>
            <person name="Srairi N."/>
            <person name="Guermazi S."/>
            <person name="Dekhil H."/>
            <person name="Karoui H."/>
            <person name="El Ayeb M."/>
        </authorList>
    </citation>
    <scope>PROTEIN SEQUENCE OF 48-111</scope>
    <scope>FUNCTION</scope>
    <scope>SUBUNIT</scope>
    <scope>MASS SPECTROMETRY</scope>
    <scope>SUBCELLULAR LOCATION</scope>
    <source>
        <tissue>Venom</tissue>
    </source>
</reference>
<reference key="4">
    <citation type="journal article" date="2006" name="Biochim. Biophys. Acta">
        <authorList>
            <person name="Gasmi A."/>
            <person name="Srairi N."/>
            <person name="Guermazi S."/>
            <person name="Dekhil H."/>
            <person name="Karoui H."/>
            <person name="El Ayeb M."/>
        </authorList>
    </citation>
    <scope>ERRATUM OF PUBMED:11343790</scope>
</reference>
<reference key="5">
    <citation type="journal article" date="2003" name="J. Biol. Chem.">
        <title>Vipera lebetina venom contains two disintegrins inhibiting laminin-binding beta1 integrins.</title>
        <authorList>
            <person name="Eble J.A."/>
            <person name="Bruckner P."/>
            <person name="Mayer U."/>
        </authorList>
    </citation>
    <scope>PROTEIN SEQUENCE OF 48-55</scope>
    <scope>FUNCTION</scope>
    <scope>SUBUNIT</scope>
    <scope>MASS SPECTROMETRY</scope>
    <source>
        <tissue>Venom</tissue>
    </source>
</reference>